<comment type="function">
    <text evidence="5">Transcription activator that coordinates abscisic acid (ABA) biosynthesis and signaling-related genes via binding to the specific promoter motif 5'-(A/T)AACCAT-3'. Represses ABA-mediated salt (e.g. NaCl and KCl) stress tolerance. Regulates leaf shape and promotes vegetative growth.</text>
</comment>
<comment type="interaction">
    <interactant intactId="EBI-15195055">
        <id>Q9FNN6</id>
    </interactant>
    <interactant intactId="EBI-5849461">
        <id>P94077</id>
        <label>LSD1</label>
    </interactant>
    <organismsDiffer>false</organismsDiffer>
    <experiments>5</experiments>
</comment>
<comment type="subcellular location">
    <subcellularLocation>
        <location evidence="1 5">Nucleus</location>
    </subcellularLocation>
</comment>
<comment type="tissue specificity">
    <text evidence="5">Expressed in young seedlings, developing leaves, sepals and trichomes.</text>
</comment>
<comment type="induction">
    <text evidence="4 5">Induced by salicylic acid (SA) and gibberellic acid (GA) (PubMed:16463103). Triggered by dehydration and salt stress (PubMed:26243618).</text>
</comment>
<comment type="disruption phenotype">
    <text evidence="5">Increased tolerance to salt stress leading to better seedling survival and enhanced seed germination on NaCl- and KCl-containing medium, due to a reduced sensitivity to and reduced levels of abscisic acid (ABA), as well as a reduced induction of stress-related genes. Altered leaf morphology, both in shape and in size.</text>
</comment>
<feature type="chain" id="PRO_0000438822" description="Transcription factor SRM1">
    <location>
        <begin position="1"/>
        <end position="298"/>
    </location>
</feature>
<feature type="domain" description="SANT" evidence="1">
    <location>
        <begin position="7"/>
        <end position="62"/>
    </location>
</feature>
<feature type="domain" description="HTH myb-type" evidence="2">
    <location>
        <begin position="111"/>
        <end position="168"/>
    </location>
</feature>
<feature type="DNA-binding region" description="H-T-H motif" evidence="2">
    <location>
        <begin position="140"/>
        <end position="164"/>
    </location>
</feature>
<feature type="region of interest" description="Disordered" evidence="3">
    <location>
        <begin position="68"/>
        <end position="118"/>
    </location>
</feature>
<feature type="region of interest" description="Disordered" evidence="3">
    <location>
        <begin position="182"/>
        <end position="245"/>
    </location>
</feature>
<feature type="compositionally biased region" description="Basic and acidic residues" evidence="3">
    <location>
        <begin position="108"/>
        <end position="118"/>
    </location>
</feature>
<feature type="compositionally biased region" description="Polar residues" evidence="3">
    <location>
        <begin position="182"/>
        <end position="200"/>
    </location>
</feature>
<feature type="compositionally biased region" description="Low complexity" evidence="3">
    <location>
        <begin position="201"/>
        <end position="215"/>
    </location>
</feature>
<accession>Q9FNN6</accession>
<reference key="1">
    <citation type="journal article" date="2006" name="Plant Mol. Biol.">
        <title>The MYB transcription factor superfamily of Arabidopsis: expression analysis and phylogenetic comparison with the rice MYB family.</title>
        <authorList>
            <person name="Chen Y."/>
            <person name="Yang X."/>
            <person name="He K."/>
            <person name="Liu M."/>
            <person name="Li J."/>
            <person name="Gao Z."/>
            <person name="Lin Z."/>
            <person name="Zhang Y."/>
            <person name="Wang X."/>
            <person name="Qiu X."/>
            <person name="Shen Y."/>
            <person name="Zhang L."/>
            <person name="Deng X."/>
            <person name="Luo J."/>
            <person name="Deng X.-W."/>
            <person name="Chen Z."/>
            <person name="Gu H."/>
            <person name="Qu L.-J."/>
        </authorList>
    </citation>
    <scope>NUCLEOTIDE SEQUENCE [MRNA]</scope>
    <scope>INDUCTION BY SALICYLIC ACID AND GIBBERELLIC ACID</scope>
    <scope>GENE FAMILY</scope>
</reference>
<reference key="2">
    <citation type="journal article" date="1997" name="DNA Res.">
        <title>Structural analysis of Arabidopsis thaliana chromosome 5. II. Sequence features of the regions of 1,044,062 bp covered by thirteen physically assigned P1 clones.</title>
        <authorList>
            <person name="Kotani H."/>
            <person name="Nakamura Y."/>
            <person name="Sato S."/>
            <person name="Kaneko T."/>
            <person name="Asamizu E."/>
            <person name="Miyajima N."/>
            <person name="Tabata S."/>
        </authorList>
    </citation>
    <scope>NUCLEOTIDE SEQUENCE [LARGE SCALE GENOMIC DNA]</scope>
    <source>
        <strain>cv. Columbia</strain>
    </source>
</reference>
<reference key="3">
    <citation type="journal article" date="2017" name="Plant J.">
        <title>Araport11: a complete reannotation of the Arabidopsis thaliana reference genome.</title>
        <authorList>
            <person name="Cheng C.Y."/>
            <person name="Krishnakumar V."/>
            <person name="Chan A.P."/>
            <person name="Thibaud-Nissen F."/>
            <person name="Schobel S."/>
            <person name="Town C.D."/>
        </authorList>
    </citation>
    <scope>GENOME REANNOTATION</scope>
    <source>
        <strain>cv. Columbia</strain>
    </source>
</reference>
<reference key="4">
    <citation type="journal article" date="2003" name="Science">
        <title>Empirical analysis of transcriptional activity in the Arabidopsis genome.</title>
        <authorList>
            <person name="Yamada K."/>
            <person name="Lim J."/>
            <person name="Dale J.M."/>
            <person name="Chen H."/>
            <person name="Shinn P."/>
            <person name="Palm C.J."/>
            <person name="Southwick A.M."/>
            <person name="Wu H.C."/>
            <person name="Kim C.J."/>
            <person name="Nguyen M."/>
            <person name="Pham P.K."/>
            <person name="Cheuk R.F."/>
            <person name="Karlin-Newmann G."/>
            <person name="Liu S.X."/>
            <person name="Lam B."/>
            <person name="Sakano H."/>
            <person name="Wu T."/>
            <person name="Yu G."/>
            <person name="Miranda M."/>
            <person name="Quach H.L."/>
            <person name="Tripp M."/>
            <person name="Chang C.H."/>
            <person name="Lee J.M."/>
            <person name="Toriumi M.J."/>
            <person name="Chan M.M."/>
            <person name="Tang C.C."/>
            <person name="Onodera C.S."/>
            <person name="Deng J.M."/>
            <person name="Akiyama K."/>
            <person name="Ansari Y."/>
            <person name="Arakawa T."/>
            <person name="Banh J."/>
            <person name="Banno F."/>
            <person name="Bowser L."/>
            <person name="Brooks S.Y."/>
            <person name="Carninci P."/>
            <person name="Chao Q."/>
            <person name="Choy N."/>
            <person name="Enju A."/>
            <person name="Goldsmith A.D."/>
            <person name="Gurjal M."/>
            <person name="Hansen N.F."/>
            <person name="Hayashizaki Y."/>
            <person name="Johnson-Hopson C."/>
            <person name="Hsuan V.W."/>
            <person name="Iida K."/>
            <person name="Karnes M."/>
            <person name="Khan S."/>
            <person name="Koesema E."/>
            <person name="Ishida J."/>
            <person name="Jiang P.X."/>
            <person name="Jones T."/>
            <person name="Kawai J."/>
            <person name="Kamiya A."/>
            <person name="Meyers C."/>
            <person name="Nakajima M."/>
            <person name="Narusaka M."/>
            <person name="Seki M."/>
            <person name="Sakurai T."/>
            <person name="Satou M."/>
            <person name="Tamse R."/>
            <person name="Vaysberg M."/>
            <person name="Wallender E.K."/>
            <person name="Wong C."/>
            <person name="Yamamura Y."/>
            <person name="Yuan S."/>
            <person name="Shinozaki K."/>
            <person name="Davis R.W."/>
            <person name="Theologis A."/>
            <person name="Ecker J.R."/>
        </authorList>
    </citation>
    <scope>NUCLEOTIDE SEQUENCE [LARGE SCALE MRNA]</scope>
    <source>
        <strain>cv. Columbia</strain>
    </source>
</reference>
<reference key="5">
    <citation type="journal article" date="2015" name="Plant Physiol.">
        <title>Salt-related MYB1 coordinates abscisic acid biosynthesis and signaling during salt stress in Arabidopsis.</title>
        <authorList>
            <person name="Wang T."/>
            <person name="Tohge T."/>
            <person name="Ivakov A."/>
            <person name="Mueller-Roeber B."/>
            <person name="Fernie A.R."/>
            <person name="Mutwil M."/>
            <person name="Schippers J.H."/>
            <person name="Persson S."/>
        </authorList>
    </citation>
    <scope>FUNCTION</scope>
    <scope>DISRUPTION PHENOTYPE</scope>
    <scope>SUBCELLULAR LOCATION</scope>
    <scope>TISSUE SPECIFICITY</scope>
    <scope>INDUCTION BY DEHYDRATION AND SALT STRESS</scope>
    <source>
        <strain>cv. Columbia</strain>
    </source>
</reference>
<gene>
    <name evidence="6" type="primary">SRM1</name>
    <name evidence="8" type="ordered locus">At5g08520</name>
</gene>
<evidence type="ECO:0000255" key="1">
    <source>
        <dbReference type="PROSITE-ProRule" id="PRU00624"/>
    </source>
</evidence>
<evidence type="ECO:0000255" key="2">
    <source>
        <dbReference type="PROSITE-ProRule" id="PRU00625"/>
    </source>
</evidence>
<evidence type="ECO:0000256" key="3">
    <source>
        <dbReference type="SAM" id="MobiDB-lite"/>
    </source>
</evidence>
<evidence type="ECO:0000269" key="4">
    <source>
    </source>
</evidence>
<evidence type="ECO:0000269" key="5">
    <source>
    </source>
</evidence>
<evidence type="ECO:0000303" key="6">
    <source>
    </source>
</evidence>
<evidence type="ECO:0000305" key="7"/>
<evidence type="ECO:0000312" key="8">
    <source>
        <dbReference type="Araport" id="AT5G08520"/>
    </source>
</evidence>
<sequence>MTVEEVSDGSVWSREDDIAFERALANNTDESEERWEKIAADVPGKSVEQIKEHYELLVEDVTRIESGCVPLPAYGSPEGSNGHAGDEGASSKKGGNSHAGESNQAGKSKSDQERRKGIAWTEDEHRLFLLGLDKYGKGDWRSISRNFVVTRTPTQVASHAQKYFIRLNSMNKDRRRSSIHDITSVGNADVSTPQGPITGQNNSNNNNNNNNNNSSPAVAGGGNKSAKQAVSQAPPGPPMYGTPAIGQPAVGTPVNLPAPPHMAYGVHAAPVPGSVVPGAAMNIGQMPYTMPRTPTAHR</sequence>
<proteinExistence type="evidence at protein level"/>
<organism>
    <name type="scientific">Arabidopsis thaliana</name>
    <name type="common">Mouse-ear cress</name>
    <dbReference type="NCBI Taxonomy" id="3702"/>
    <lineage>
        <taxon>Eukaryota</taxon>
        <taxon>Viridiplantae</taxon>
        <taxon>Streptophyta</taxon>
        <taxon>Embryophyta</taxon>
        <taxon>Tracheophyta</taxon>
        <taxon>Spermatophyta</taxon>
        <taxon>Magnoliopsida</taxon>
        <taxon>eudicotyledons</taxon>
        <taxon>Gunneridae</taxon>
        <taxon>Pentapetalae</taxon>
        <taxon>rosids</taxon>
        <taxon>malvids</taxon>
        <taxon>Brassicales</taxon>
        <taxon>Brassicaceae</taxon>
        <taxon>Camelineae</taxon>
        <taxon>Arabidopsis</taxon>
    </lineage>
</organism>
<protein>
    <recommendedName>
        <fullName evidence="7">Transcription factor SRM1</fullName>
    </recommendedName>
    <alternativeName>
        <fullName evidence="7">Myb-related protein SRM1</fullName>
    </alternativeName>
    <alternativeName>
        <fullName evidence="6">Protein SALT-RELATED MYB 1</fullName>
    </alternativeName>
</protein>
<dbReference type="EMBL" id="AY519532">
    <property type="protein sequence ID" value="AAS10002.1"/>
    <property type="molecule type" value="mRNA"/>
</dbReference>
<dbReference type="EMBL" id="AB006697">
    <property type="protein sequence ID" value="BAB10001.1"/>
    <property type="molecule type" value="Genomic_DNA"/>
</dbReference>
<dbReference type="EMBL" id="CP002688">
    <property type="protein sequence ID" value="AED91314.1"/>
    <property type="molecule type" value="Genomic_DNA"/>
</dbReference>
<dbReference type="EMBL" id="AY072090">
    <property type="protein sequence ID" value="AAL59913.1"/>
    <property type="molecule type" value="mRNA"/>
</dbReference>
<dbReference type="EMBL" id="AY096571">
    <property type="protein sequence ID" value="AAM20221.1"/>
    <property type="molecule type" value="mRNA"/>
</dbReference>
<dbReference type="RefSeq" id="NP_196469.1">
    <property type="nucleotide sequence ID" value="NM_120937.5"/>
</dbReference>
<dbReference type="FunCoup" id="Q9FNN6">
    <property type="interactions" value="244"/>
</dbReference>
<dbReference type="IntAct" id="Q9FNN6">
    <property type="interactions" value="5"/>
</dbReference>
<dbReference type="STRING" id="3702.Q9FNN6"/>
<dbReference type="iPTMnet" id="Q9FNN6"/>
<dbReference type="PaxDb" id="3702-AT5G08520.1"/>
<dbReference type="ProteomicsDB" id="226732"/>
<dbReference type="EnsemblPlants" id="AT5G08520.1">
    <property type="protein sequence ID" value="AT5G08520.1"/>
    <property type="gene ID" value="AT5G08520"/>
</dbReference>
<dbReference type="GeneID" id="830751"/>
<dbReference type="Gramene" id="AT5G08520.1">
    <property type="protein sequence ID" value="AT5G08520.1"/>
    <property type="gene ID" value="AT5G08520"/>
</dbReference>
<dbReference type="KEGG" id="ath:AT5G08520"/>
<dbReference type="Araport" id="AT5G08520"/>
<dbReference type="TAIR" id="AT5G08520">
    <property type="gene designation" value="MYBS2"/>
</dbReference>
<dbReference type="eggNOG" id="KOG0724">
    <property type="taxonomic scope" value="Eukaryota"/>
</dbReference>
<dbReference type="HOGENOM" id="CLU_060837_2_0_1"/>
<dbReference type="InParanoid" id="Q9FNN6"/>
<dbReference type="OMA" id="PHLAYGM"/>
<dbReference type="PhylomeDB" id="Q9FNN6"/>
<dbReference type="PRO" id="PR:Q9FNN6"/>
<dbReference type="Proteomes" id="UP000006548">
    <property type="component" value="Chromosome 5"/>
</dbReference>
<dbReference type="ExpressionAtlas" id="Q9FNN6">
    <property type="expression patterns" value="baseline and differential"/>
</dbReference>
<dbReference type="GO" id="GO:0005634">
    <property type="term" value="C:nucleus"/>
    <property type="evidence" value="ECO:0000314"/>
    <property type="project" value="UniProtKB"/>
</dbReference>
<dbReference type="GO" id="GO:0003700">
    <property type="term" value="F:DNA-binding transcription factor activity"/>
    <property type="evidence" value="ECO:0000314"/>
    <property type="project" value="UniProtKB"/>
</dbReference>
<dbReference type="GO" id="GO:0000976">
    <property type="term" value="F:transcription cis-regulatory region binding"/>
    <property type="evidence" value="ECO:0000353"/>
    <property type="project" value="TAIR"/>
</dbReference>
<dbReference type="GO" id="GO:0009738">
    <property type="term" value="P:abscisic acid-activated signaling pathway"/>
    <property type="evidence" value="ECO:0007669"/>
    <property type="project" value="UniProtKB-KW"/>
</dbReference>
<dbReference type="GO" id="GO:1901001">
    <property type="term" value="P:negative regulation of response to salt stress"/>
    <property type="evidence" value="ECO:0000315"/>
    <property type="project" value="UniProtKB"/>
</dbReference>
<dbReference type="GO" id="GO:0010116">
    <property type="term" value="P:positive regulation of abscisic acid biosynthetic process"/>
    <property type="evidence" value="ECO:0000315"/>
    <property type="project" value="UniProtKB"/>
</dbReference>
<dbReference type="GO" id="GO:1905615">
    <property type="term" value="P:positive regulation of developmental vegetative growth"/>
    <property type="evidence" value="ECO:0000315"/>
    <property type="project" value="UniProtKB"/>
</dbReference>
<dbReference type="GO" id="GO:0045893">
    <property type="term" value="P:positive regulation of DNA-templated transcription"/>
    <property type="evidence" value="ECO:0000314"/>
    <property type="project" value="UniProtKB"/>
</dbReference>
<dbReference type="GO" id="GO:0009787">
    <property type="term" value="P:regulation of abscisic acid-activated signaling pathway"/>
    <property type="evidence" value="ECO:0000315"/>
    <property type="project" value="UniProtKB"/>
</dbReference>
<dbReference type="GO" id="GO:0006355">
    <property type="term" value="P:regulation of DNA-templated transcription"/>
    <property type="evidence" value="ECO:0000304"/>
    <property type="project" value="TAIR"/>
</dbReference>
<dbReference type="GO" id="GO:1901371">
    <property type="term" value="P:regulation of leaf morphogenesis"/>
    <property type="evidence" value="ECO:0000315"/>
    <property type="project" value="UniProtKB"/>
</dbReference>
<dbReference type="GO" id="GO:0009739">
    <property type="term" value="P:response to gibberellin"/>
    <property type="evidence" value="ECO:0000270"/>
    <property type="project" value="UniProtKB"/>
</dbReference>
<dbReference type="GO" id="GO:0009751">
    <property type="term" value="P:response to salicylic acid"/>
    <property type="evidence" value="ECO:0000270"/>
    <property type="project" value="UniProtKB"/>
</dbReference>
<dbReference type="GO" id="GO:0009651">
    <property type="term" value="P:response to salt stress"/>
    <property type="evidence" value="ECO:0000270"/>
    <property type="project" value="UniProtKB"/>
</dbReference>
<dbReference type="GO" id="GO:0009414">
    <property type="term" value="P:response to water deprivation"/>
    <property type="evidence" value="ECO:0000270"/>
    <property type="project" value="UniProtKB"/>
</dbReference>
<dbReference type="CDD" id="cd00167">
    <property type="entry name" value="SANT"/>
    <property type="match status" value="2"/>
</dbReference>
<dbReference type="FunFam" id="1.10.10.60:FF:000009">
    <property type="entry name" value="transcription factor MYB1R1"/>
    <property type="match status" value="1"/>
</dbReference>
<dbReference type="FunFam" id="1.10.10.60:FF:000154">
    <property type="entry name" value="Transcription factor SRM1"/>
    <property type="match status" value="1"/>
</dbReference>
<dbReference type="Gene3D" id="1.10.10.60">
    <property type="entry name" value="Homeodomain-like"/>
    <property type="match status" value="2"/>
</dbReference>
<dbReference type="InterPro" id="IPR009057">
    <property type="entry name" value="Homeodomain-like_sf"/>
</dbReference>
<dbReference type="InterPro" id="IPR017930">
    <property type="entry name" value="Myb_dom"/>
</dbReference>
<dbReference type="InterPro" id="IPR006447">
    <property type="entry name" value="Myb_dom_plants"/>
</dbReference>
<dbReference type="InterPro" id="IPR001005">
    <property type="entry name" value="SANT/Myb"/>
</dbReference>
<dbReference type="InterPro" id="IPR017884">
    <property type="entry name" value="SANT_dom"/>
</dbReference>
<dbReference type="NCBIfam" id="TIGR01557">
    <property type="entry name" value="myb_SHAQKYF"/>
    <property type="match status" value="1"/>
</dbReference>
<dbReference type="PANTHER" id="PTHR44042">
    <property type="entry name" value="DUPLICATED HOMEODOMAIN-LIKE SUPERFAMILY PROTEIN-RELATED"/>
    <property type="match status" value="1"/>
</dbReference>
<dbReference type="PANTHER" id="PTHR44042:SF66">
    <property type="entry name" value="MYB FAMILY TRANSCRIPTION FACTOR"/>
    <property type="match status" value="1"/>
</dbReference>
<dbReference type="Pfam" id="PF00249">
    <property type="entry name" value="Myb_DNA-binding"/>
    <property type="match status" value="2"/>
</dbReference>
<dbReference type="SMART" id="SM00717">
    <property type="entry name" value="SANT"/>
    <property type="match status" value="2"/>
</dbReference>
<dbReference type="SUPFAM" id="SSF46689">
    <property type="entry name" value="Homeodomain-like"/>
    <property type="match status" value="2"/>
</dbReference>
<dbReference type="PROSITE" id="PS51294">
    <property type="entry name" value="HTH_MYB"/>
    <property type="match status" value="1"/>
</dbReference>
<dbReference type="PROSITE" id="PS51293">
    <property type="entry name" value="SANT"/>
    <property type="match status" value="1"/>
</dbReference>
<keyword id="KW-0938">Abscisic acid signaling pathway</keyword>
<keyword id="KW-0010">Activator</keyword>
<keyword id="KW-0238">DNA-binding</keyword>
<keyword id="KW-0539">Nucleus</keyword>
<keyword id="KW-1185">Reference proteome</keyword>
<keyword id="KW-0804">Transcription</keyword>
<keyword id="KW-0805">Transcription regulation</keyword>
<name>SRM1_ARATH</name>